<proteinExistence type="inferred from homology"/>
<gene>
    <name evidence="1" type="primary">pth</name>
    <name type="ordered locus">DIP0900</name>
</gene>
<accession>Q6NI78</accession>
<evidence type="ECO:0000255" key="1">
    <source>
        <dbReference type="HAMAP-Rule" id="MF_00083"/>
    </source>
</evidence>
<dbReference type="EC" id="3.1.1.29" evidence="1"/>
<dbReference type="EMBL" id="BX248356">
    <property type="protein sequence ID" value="CAE49416.1"/>
    <property type="molecule type" value="Genomic_DNA"/>
</dbReference>
<dbReference type="RefSeq" id="WP_010934654.1">
    <property type="nucleotide sequence ID" value="NC_002935.2"/>
</dbReference>
<dbReference type="SMR" id="Q6NI78"/>
<dbReference type="STRING" id="257309.DIP0900"/>
<dbReference type="KEGG" id="cdi:DIP0900"/>
<dbReference type="HOGENOM" id="CLU_062456_2_2_11"/>
<dbReference type="Proteomes" id="UP000002198">
    <property type="component" value="Chromosome"/>
</dbReference>
<dbReference type="GO" id="GO:0005737">
    <property type="term" value="C:cytoplasm"/>
    <property type="evidence" value="ECO:0007669"/>
    <property type="project" value="UniProtKB-SubCell"/>
</dbReference>
<dbReference type="GO" id="GO:0004045">
    <property type="term" value="F:peptidyl-tRNA hydrolase activity"/>
    <property type="evidence" value="ECO:0007669"/>
    <property type="project" value="UniProtKB-UniRule"/>
</dbReference>
<dbReference type="GO" id="GO:0000049">
    <property type="term" value="F:tRNA binding"/>
    <property type="evidence" value="ECO:0007669"/>
    <property type="project" value="UniProtKB-UniRule"/>
</dbReference>
<dbReference type="GO" id="GO:0006515">
    <property type="term" value="P:protein quality control for misfolded or incompletely synthesized proteins"/>
    <property type="evidence" value="ECO:0007669"/>
    <property type="project" value="UniProtKB-UniRule"/>
</dbReference>
<dbReference type="GO" id="GO:0072344">
    <property type="term" value="P:rescue of stalled ribosome"/>
    <property type="evidence" value="ECO:0007669"/>
    <property type="project" value="UniProtKB-UniRule"/>
</dbReference>
<dbReference type="CDD" id="cd00462">
    <property type="entry name" value="PTH"/>
    <property type="match status" value="1"/>
</dbReference>
<dbReference type="FunFam" id="3.40.50.1470:FF:000001">
    <property type="entry name" value="Peptidyl-tRNA hydrolase"/>
    <property type="match status" value="1"/>
</dbReference>
<dbReference type="Gene3D" id="3.40.50.1470">
    <property type="entry name" value="Peptidyl-tRNA hydrolase"/>
    <property type="match status" value="1"/>
</dbReference>
<dbReference type="HAMAP" id="MF_00083">
    <property type="entry name" value="Pept_tRNA_hydro_bact"/>
    <property type="match status" value="1"/>
</dbReference>
<dbReference type="InterPro" id="IPR001328">
    <property type="entry name" value="Pept_tRNA_hydro"/>
</dbReference>
<dbReference type="InterPro" id="IPR018171">
    <property type="entry name" value="Pept_tRNA_hydro_CS"/>
</dbReference>
<dbReference type="InterPro" id="IPR036416">
    <property type="entry name" value="Pept_tRNA_hydro_sf"/>
</dbReference>
<dbReference type="NCBIfam" id="TIGR00447">
    <property type="entry name" value="pth"/>
    <property type="match status" value="1"/>
</dbReference>
<dbReference type="PANTHER" id="PTHR17224">
    <property type="entry name" value="PEPTIDYL-TRNA HYDROLASE"/>
    <property type="match status" value="1"/>
</dbReference>
<dbReference type="PANTHER" id="PTHR17224:SF1">
    <property type="entry name" value="PEPTIDYL-TRNA HYDROLASE"/>
    <property type="match status" value="1"/>
</dbReference>
<dbReference type="Pfam" id="PF01195">
    <property type="entry name" value="Pept_tRNA_hydro"/>
    <property type="match status" value="1"/>
</dbReference>
<dbReference type="SUPFAM" id="SSF53178">
    <property type="entry name" value="Peptidyl-tRNA hydrolase-like"/>
    <property type="match status" value="1"/>
</dbReference>
<dbReference type="PROSITE" id="PS01195">
    <property type="entry name" value="PEPT_TRNA_HYDROL_1"/>
    <property type="match status" value="1"/>
</dbReference>
<dbReference type="PROSITE" id="PS01196">
    <property type="entry name" value="PEPT_TRNA_HYDROL_2"/>
    <property type="match status" value="1"/>
</dbReference>
<organism>
    <name type="scientific">Corynebacterium diphtheriae (strain ATCC 700971 / NCTC 13129 / Biotype gravis)</name>
    <dbReference type="NCBI Taxonomy" id="257309"/>
    <lineage>
        <taxon>Bacteria</taxon>
        <taxon>Bacillati</taxon>
        <taxon>Actinomycetota</taxon>
        <taxon>Actinomycetes</taxon>
        <taxon>Mycobacteriales</taxon>
        <taxon>Corynebacteriaceae</taxon>
        <taxon>Corynebacterium</taxon>
    </lineage>
</organism>
<feature type="chain" id="PRO_0000187725" description="Peptidyl-tRNA hydrolase">
    <location>
        <begin position="1"/>
        <end position="184"/>
    </location>
</feature>
<feature type="active site" description="Proton acceptor" evidence="1">
    <location>
        <position position="22"/>
    </location>
</feature>
<feature type="binding site" evidence="1">
    <location>
        <position position="17"/>
    </location>
    <ligand>
        <name>tRNA</name>
        <dbReference type="ChEBI" id="CHEBI:17843"/>
    </ligand>
</feature>
<feature type="binding site" evidence="1">
    <location>
        <position position="71"/>
    </location>
    <ligand>
        <name>tRNA</name>
        <dbReference type="ChEBI" id="CHEBI:17843"/>
    </ligand>
</feature>
<feature type="binding site" evidence="1">
    <location>
        <position position="73"/>
    </location>
    <ligand>
        <name>tRNA</name>
        <dbReference type="ChEBI" id="CHEBI:17843"/>
    </ligand>
</feature>
<feature type="binding site" evidence="1">
    <location>
        <position position="119"/>
    </location>
    <ligand>
        <name>tRNA</name>
        <dbReference type="ChEBI" id="CHEBI:17843"/>
    </ligand>
</feature>
<feature type="site" description="Discriminates between blocked and unblocked aminoacyl-tRNA" evidence="1">
    <location>
        <position position="12"/>
    </location>
</feature>
<feature type="site" description="Stabilizes the basic form of H active site to accept a proton" evidence="1">
    <location>
        <position position="98"/>
    </location>
</feature>
<protein>
    <recommendedName>
        <fullName evidence="1">Peptidyl-tRNA hydrolase</fullName>
        <shortName evidence="1">Pth</shortName>
        <ecNumber evidence="1">3.1.1.29</ecNumber>
    </recommendedName>
</protein>
<comment type="function">
    <text evidence="1">Hydrolyzes ribosome-free peptidyl-tRNAs (with 1 or more amino acids incorporated), which drop off the ribosome during protein synthesis, or as a result of ribosome stalling.</text>
</comment>
<comment type="function">
    <text evidence="1">Catalyzes the release of premature peptidyl moieties from peptidyl-tRNA molecules trapped in stalled 50S ribosomal subunits, and thus maintains levels of free tRNAs and 50S ribosomes.</text>
</comment>
<comment type="catalytic activity">
    <reaction evidence="1">
        <text>an N-acyl-L-alpha-aminoacyl-tRNA + H2O = an N-acyl-L-amino acid + a tRNA + H(+)</text>
        <dbReference type="Rhea" id="RHEA:54448"/>
        <dbReference type="Rhea" id="RHEA-COMP:10123"/>
        <dbReference type="Rhea" id="RHEA-COMP:13883"/>
        <dbReference type="ChEBI" id="CHEBI:15377"/>
        <dbReference type="ChEBI" id="CHEBI:15378"/>
        <dbReference type="ChEBI" id="CHEBI:59874"/>
        <dbReference type="ChEBI" id="CHEBI:78442"/>
        <dbReference type="ChEBI" id="CHEBI:138191"/>
        <dbReference type="EC" id="3.1.1.29"/>
    </reaction>
</comment>
<comment type="subunit">
    <text evidence="1">Monomer.</text>
</comment>
<comment type="subcellular location">
    <subcellularLocation>
        <location evidence="1">Cytoplasm</location>
    </subcellularLocation>
</comment>
<comment type="similarity">
    <text evidence="1">Belongs to the PTH family.</text>
</comment>
<reference key="1">
    <citation type="journal article" date="2003" name="Nucleic Acids Res.">
        <title>The complete genome sequence and analysis of Corynebacterium diphtheriae NCTC13129.</title>
        <authorList>
            <person name="Cerdeno-Tarraga A.-M."/>
            <person name="Efstratiou A."/>
            <person name="Dover L.G."/>
            <person name="Holden M.T.G."/>
            <person name="Pallen M.J."/>
            <person name="Bentley S.D."/>
            <person name="Besra G.S."/>
            <person name="Churcher C.M."/>
            <person name="James K.D."/>
            <person name="De Zoysa A."/>
            <person name="Chillingworth T."/>
            <person name="Cronin A."/>
            <person name="Dowd L."/>
            <person name="Feltwell T."/>
            <person name="Hamlin N."/>
            <person name="Holroyd S."/>
            <person name="Jagels K."/>
            <person name="Moule S."/>
            <person name="Quail M.A."/>
            <person name="Rabbinowitsch E."/>
            <person name="Rutherford K.M."/>
            <person name="Thomson N.R."/>
            <person name="Unwin L."/>
            <person name="Whitehead S."/>
            <person name="Barrell B.G."/>
            <person name="Parkhill J."/>
        </authorList>
    </citation>
    <scope>NUCLEOTIDE SEQUENCE [LARGE SCALE GENOMIC DNA]</scope>
    <source>
        <strain>ATCC 700971 / NCTC 13129 / Biotype gravis</strain>
    </source>
</reference>
<keyword id="KW-0963">Cytoplasm</keyword>
<keyword id="KW-0378">Hydrolase</keyword>
<keyword id="KW-1185">Reference proteome</keyword>
<keyword id="KW-0694">RNA-binding</keyword>
<keyword id="KW-0820">tRNA-binding</keyword>
<sequence>MTSPYLIVGLGNLGPEYTKTRHNIGYMAIDELLTRTSPMPATLTVHKKTNTLVAETRLGTQKVIVAKPRAFMNVTGPSVRKLADFFTVDRNRIVVLYDDLDLEFGAIKFRHGGGDHGHNGLKSITQALGTKDYIRGGIGIGRPPGRMAPKSFVLKPFSKIEQSELPIVCADAADEVEKITTSEL</sequence>
<name>PTH_CORDI</name>